<comment type="similarity">
    <text evidence="1">Belongs to the DinB family.</text>
</comment>
<comment type="sequence caution" evidence="1">
    <conflict type="erroneous initiation">
        <sequence resource="EMBL-CDS" id="CAB07966"/>
    </conflict>
</comment>
<evidence type="ECO:0000305" key="1"/>
<evidence type="ECO:0007829" key="2">
    <source>
        <dbReference type="PDB" id="2QE9"/>
    </source>
</evidence>
<gene>
    <name type="primary">yizA</name>
    <name type="synonym">yucC</name>
    <name type="ordered locus">BSU10800</name>
</gene>
<sequence length="159" mass="18812">MMKFFEYNWQVRDQWFTWCHQLTTEELLKNRLGGVENILYTLFHIIDVEYSWIRAIQGKEDIAVQFADYQTLNKVKSLSNTFRTEIIDVLQTHSDQIKDELVSVPWETGVLYTRDEILHHIIAHEIHHIGQLSVWARELKLSPVSASFIGRTLKPIHSY</sequence>
<organism>
    <name type="scientific">Bacillus subtilis (strain 168)</name>
    <dbReference type="NCBI Taxonomy" id="224308"/>
    <lineage>
        <taxon>Bacteria</taxon>
        <taxon>Bacillati</taxon>
        <taxon>Bacillota</taxon>
        <taxon>Bacilli</taxon>
        <taxon>Bacillales</taxon>
        <taxon>Bacillaceae</taxon>
        <taxon>Bacillus</taxon>
    </lineage>
</organism>
<protein>
    <recommendedName>
        <fullName>Uncharacterized protein YizA</fullName>
    </recommendedName>
</protein>
<name>YIZA_BACSU</name>
<proteinExistence type="evidence at protein level"/>
<feature type="chain" id="PRO_0000049591" description="Uncharacterized protein YizA">
    <location>
        <begin position="1"/>
        <end position="159"/>
    </location>
</feature>
<feature type="binding site">
    <location>
        <position position="44"/>
    </location>
    <ligand>
        <name>a divalent metal cation</name>
        <dbReference type="ChEBI" id="CHEBI:60240"/>
    </ligand>
</feature>
<feature type="binding site">
    <location>
        <position position="124"/>
    </location>
    <ligand>
        <name>a divalent metal cation</name>
        <dbReference type="ChEBI" id="CHEBI:60240"/>
    </ligand>
</feature>
<feature type="binding site">
    <location>
        <position position="128"/>
    </location>
    <ligand>
        <name>a divalent metal cation</name>
        <dbReference type="ChEBI" id="CHEBI:60240"/>
    </ligand>
</feature>
<feature type="helix" evidence="2">
    <location>
        <begin position="1"/>
        <end position="18"/>
    </location>
</feature>
<feature type="helix" evidence="2">
    <location>
        <begin position="19"/>
        <end position="21"/>
    </location>
</feature>
<feature type="helix" evidence="2">
    <location>
        <begin position="24"/>
        <end position="28"/>
    </location>
</feature>
<feature type="helix" evidence="2">
    <location>
        <begin position="38"/>
        <end position="57"/>
    </location>
</feature>
<feature type="helix" evidence="2">
    <location>
        <begin position="66"/>
        <end position="68"/>
    </location>
</feature>
<feature type="helix" evidence="2">
    <location>
        <begin position="72"/>
        <end position="90"/>
    </location>
</feature>
<feature type="strand" evidence="2">
    <location>
        <begin position="105"/>
        <end position="107"/>
    </location>
</feature>
<feature type="helix" evidence="2">
    <location>
        <begin position="114"/>
        <end position="138"/>
    </location>
</feature>
<feature type="helix" evidence="2">
    <location>
        <begin position="156"/>
        <end position="158"/>
    </location>
</feature>
<reference key="1">
    <citation type="submission" date="1997-04" db="EMBL/GenBank/DDBJ databases">
        <title>Bacillus subtilis genome project, DNA sequence from yucA to yucH.</title>
        <authorList>
            <person name="Oudega B."/>
            <person name="Koningstein G."/>
            <person name="Duesterhoeft A."/>
        </authorList>
    </citation>
    <scope>NUCLEOTIDE SEQUENCE [GENOMIC DNA]</scope>
    <source>
        <strain>168</strain>
    </source>
</reference>
<reference key="2">
    <citation type="journal article" date="1997" name="Nature">
        <title>The complete genome sequence of the Gram-positive bacterium Bacillus subtilis.</title>
        <authorList>
            <person name="Kunst F."/>
            <person name="Ogasawara N."/>
            <person name="Moszer I."/>
            <person name="Albertini A.M."/>
            <person name="Alloni G."/>
            <person name="Azevedo V."/>
            <person name="Bertero M.G."/>
            <person name="Bessieres P."/>
            <person name="Bolotin A."/>
            <person name="Borchert S."/>
            <person name="Borriss R."/>
            <person name="Boursier L."/>
            <person name="Brans A."/>
            <person name="Braun M."/>
            <person name="Brignell S.C."/>
            <person name="Bron S."/>
            <person name="Brouillet S."/>
            <person name="Bruschi C.V."/>
            <person name="Caldwell B."/>
            <person name="Capuano V."/>
            <person name="Carter N.M."/>
            <person name="Choi S.-K."/>
            <person name="Codani J.-J."/>
            <person name="Connerton I.F."/>
            <person name="Cummings N.J."/>
            <person name="Daniel R.A."/>
            <person name="Denizot F."/>
            <person name="Devine K.M."/>
            <person name="Duesterhoeft A."/>
            <person name="Ehrlich S.D."/>
            <person name="Emmerson P.T."/>
            <person name="Entian K.-D."/>
            <person name="Errington J."/>
            <person name="Fabret C."/>
            <person name="Ferrari E."/>
            <person name="Foulger D."/>
            <person name="Fritz C."/>
            <person name="Fujita M."/>
            <person name="Fujita Y."/>
            <person name="Fuma S."/>
            <person name="Galizzi A."/>
            <person name="Galleron N."/>
            <person name="Ghim S.-Y."/>
            <person name="Glaser P."/>
            <person name="Goffeau A."/>
            <person name="Golightly E.J."/>
            <person name="Grandi G."/>
            <person name="Guiseppi G."/>
            <person name="Guy B.J."/>
            <person name="Haga K."/>
            <person name="Haiech J."/>
            <person name="Harwood C.R."/>
            <person name="Henaut A."/>
            <person name="Hilbert H."/>
            <person name="Holsappel S."/>
            <person name="Hosono S."/>
            <person name="Hullo M.-F."/>
            <person name="Itaya M."/>
            <person name="Jones L.-M."/>
            <person name="Joris B."/>
            <person name="Karamata D."/>
            <person name="Kasahara Y."/>
            <person name="Klaerr-Blanchard M."/>
            <person name="Klein C."/>
            <person name="Kobayashi Y."/>
            <person name="Koetter P."/>
            <person name="Koningstein G."/>
            <person name="Krogh S."/>
            <person name="Kumano M."/>
            <person name="Kurita K."/>
            <person name="Lapidus A."/>
            <person name="Lardinois S."/>
            <person name="Lauber J."/>
            <person name="Lazarevic V."/>
            <person name="Lee S.-M."/>
            <person name="Levine A."/>
            <person name="Liu H."/>
            <person name="Masuda S."/>
            <person name="Mauel C."/>
            <person name="Medigue C."/>
            <person name="Medina N."/>
            <person name="Mellado R.P."/>
            <person name="Mizuno M."/>
            <person name="Moestl D."/>
            <person name="Nakai S."/>
            <person name="Noback M."/>
            <person name="Noone D."/>
            <person name="O'Reilly M."/>
            <person name="Ogawa K."/>
            <person name="Ogiwara A."/>
            <person name="Oudega B."/>
            <person name="Park S.-H."/>
            <person name="Parro V."/>
            <person name="Pohl T.M."/>
            <person name="Portetelle D."/>
            <person name="Porwollik S."/>
            <person name="Prescott A.M."/>
            <person name="Presecan E."/>
            <person name="Pujic P."/>
            <person name="Purnelle B."/>
            <person name="Rapoport G."/>
            <person name="Rey M."/>
            <person name="Reynolds S."/>
            <person name="Rieger M."/>
            <person name="Rivolta C."/>
            <person name="Rocha E."/>
            <person name="Roche B."/>
            <person name="Rose M."/>
            <person name="Sadaie Y."/>
            <person name="Sato T."/>
            <person name="Scanlan E."/>
            <person name="Schleich S."/>
            <person name="Schroeter R."/>
            <person name="Scoffone F."/>
            <person name="Sekiguchi J."/>
            <person name="Sekowska A."/>
            <person name="Seror S.J."/>
            <person name="Serror P."/>
            <person name="Shin B.-S."/>
            <person name="Soldo B."/>
            <person name="Sorokin A."/>
            <person name="Tacconi E."/>
            <person name="Takagi T."/>
            <person name="Takahashi H."/>
            <person name="Takemaru K."/>
            <person name="Takeuchi M."/>
            <person name="Tamakoshi A."/>
            <person name="Tanaka T."/>
            <person name="Terpstra P."/>
            <person name="Tognoni A."/>
            <person name="Tosato V."/>
            <person name="Uchiyama S."/>
            <person name="Vandenbol M."/>
            <person name="Vannier F."/>
            <person name="Vassarotti A."/>
            <person name="Viari A."/>
            <person name="Wambutt R."/>
            <person name="Wedler E."/>
            <person name="Wedler H."/>
            <person name="Weitzenegger T."/>
            <person name="Winters P."/>
            <person name="Wipat A."/>
            <person name="Yamamoto H."/>
            <person name="Yamane K."/>
            <person name="Yasumoto K."/>
            <person name="Yata K."/>
            <person name="Yoshida K."/>
            <person name="Yoshikawa H.-F."/>
            <person name="Zumstein E."/>
            <person name="Yoshikawa H."/>
            <person name="Danchin A."/>
        </authorList>
    </citation>
    <scope>NUCLEOTIDE SEQUENCE [LARGE SCALE GENOMIC DNA]</scope>
    <source>
        <strain>168</strain>
    </source>
</reference>
<reference key="3">
    <citation type="submission" date="2007-07" db="PDB data bank">
        <title>Crystal structure of uncharacterized protein BSU10800 (YP_054576.1) from Bacillus subtilis at 1.90 A resolution.</title>
        <authorList>
            <consortium name="Joint center for structural genomics (JCSG)"/>
        </authorList>
    </citation>
    <scope>X-RAY CRYSTALLOGRAPHY (1.9 ANGSTROMS) IN COMPLEX WITH CITRATE AND NICKEL IONS</scope>
</reference>
<accession>Q7WY73</accession>
<accession>O05273</accession>
<dbReference type="EMBL" id="Z93940">
    <property type="protein sequence ID" value="CAB07966.1"/>
    <property type="status" value="ALT_INIT"/>
    <property type="molecule type" value="Genomic_DNA"/>
</dbReference>
<dbReference type="EMBL" id="AL009126">
    <property type="protein sequence ID" value="CAE01451.1"/>
    <property type="molecule type" value="Genomic_DNA"/>
</dbReference>
<dbReference type="RefSeq" id="WP_010886470.1">
    <property type="nucleotide sequence ID" value="NZ_OZ025638.1"/>
</dbReference>
<dbReference type="RefSeq" id="YP_054576.1">
    <property type="nucleotide sequence ID" value="NC_000964.3"/>
</dbReference>
<dbReference type="PDB" id="2QE9">
    <property type="method" value="X-ray"/>
    <property type="resolution" value="1.90 A"/>
    <property type="chains" value="A/B=1-159"/>
</dbReference>
<dbReference type="PDBsum" id="2QE9"/>
<dbReference type="SMR" id="Q7WY73"/>
<dbReference type="FunCoup" id="Q7WY73">
    <property type="interactions" value="21"/>
</dbReference>
<dbReference type="STRING" id="224308.BSU10800"/>
<dbReference type="PaxDb" id="224308-BSU10800"/>
<dbReference type="DNASU" id="2914284"/>
<dbReference type="EnsemblBacteria" id="CAE01451">
    <property type="protein sequence ID" value="CAE01451"/>
    <property type="gene ID" value="BSU_10800"/>
</dbReference>
<dbReference type="GeneID" id="2914284"/>
<dbReference type="KEGG" id="bsu:BSU10800"/>
<dbReference type="PATRIC" id="fig|224308.43.peg.1126"/>
<dbReference type="eggNOG" id="COG2318">
    <property type="taxonomic scope" value="Bacteria"/>
</dbReference>
<dbReference type="InParanoid" id="Q7WY73"/>
<dbReference type="OrthoDB" id="25666at2"/>
<dbReference type="BioCyc" id="BSUB:BSU10800-MONOMER"/>
<dbReference type="EvolutionaryTrace" id="Q7WY73"/>
<dbReference type="Proteomes" id="UP000001570">
    <property type="component" value="Chromosome"/>
</dbReference>
<dbReference type="GO" id="GO:0046872">
    <property type="term" value="F:metal ion binding"/>
    <property type="evidence" value="ECO:0007669"/>
    <property type="project" value="UniProtKB-KW"/>
</dbReference>
<dbReference type="Gene3D" id="1.20.120.450">
    <property type="entry name" value="dinb family like domain"/>
    <property type="match status" value="1"/>
</dbReference>
<dbReference type="InterPro" id="IPR007837">
    <property type="entry name" value="DinB"/>
</dbReference>
<dbReference type="InterPro" id="IPR034660">
    <property type="entry name" value="DinB/YfiT-like"/>
</dbReference>
<dbReference type="PANTHER" id="PTHR37302:SF3">
    <property type="entry name" value="DAMAGE-INDUCIBLE PROTEIN DINB"/>
    <property type="match status" value="1"/>
</dbReference>
<dbReference type="PANTHER" id="PTHR37302">
    <property type="entry name" value="SLR1116 PROTEIN"/>
    <property type="match status" value="1"/>
</dbReference>
<dbReference type="Pfam" id="PF05163">
    <property type="entry name" value="DinB"/>
    <property type="match status" value="1"/>
</dbReference>
<dbReference type="SUPFAM" id="SSF109854">
    <property type="entry name" value="DinB/YfiT-like putative metalloenzymes"/>
    <property type="match status" value="1"/>
</dbReference>
<keyword id="KW-0002">3D-structure</keyword>
<keyword id="KW-0479">Metal-binding</keyword>
<keyword id="KW-1185">Reference proteome</keyword>